<organism>
    <name type="scientific">Chromobacterium violaceum (strain ATCC 12472 / DSM 30191 / JCM 1249 / CCUG 213 / NBRC 12614 / NCIMB 9131 / NCTC 9757 / MK)</name>
    <dbReference type="NCBI Taxonomy" id="243365"/>
    <lineage>
        <taxon>Bacteria</taxon>
        <taxon>Pseudomonadati</taxon>
        <taxon>Pseudomonadota</taxon>
        <taxon>Betaproteobacteria</taxon>
        <taxon>Neisseriales</taxon>
        <taxon>Chromobacteriaceae</taxon>
        <taxon>Chromobacterium</taxon>
    </lineage>
</organism>
<evidence type="ECO:0000255" key="1">
    <source>
        <dbReference type="HAMAP-Rule" id="MF_00037"/>
    </source>
</evidence>
<protein>
    <recommendedName>
        <fullName evidence="1">UDP-N-acetylenolpyruvoylglucosamine reductase</fullName>
        <ecNumber evidence="1">1.3.1.98</ecNumber>
    </recommendedName>
    <alternativeName>
        <fullName evidence="1">UDP-N-acetylmuramate dehydrogenase</fullName>
    </alternativeName>
</protein>
<feature type="chain" id="PRO_0000179198" description="UDP-N-acetylenolpyruvoylglucosamine reductase">
    <location>
        <begin position="1"/>
        <end position="341"/>
    </location>
</feature>
<feature type="domain" description="FAD-binding PCMH-type" evidence="1">
    <location>
        <begin position="19"/>
        <end position="191"/>
    </location>
</feature>
<feature type="active site" evidence="1">
    <location>
        <position position="167"/>
    </location>
</feature>
<feature type="active site" description="Proton donor" evidence="1">
    <location>
        <position position="241"/>
    </location>
</feature>
<feature type="active site" evidence="1">
    <location>
        <position position="337"/>
    </location>
</feature>
<comment type="function">
    <text evidence="1">Cell wall formation.</text>
</comment>
<comment type="catalytic activity">
    <reaction evidence="1">
        <text>UDP-N-acetyl-alpha-D-muramate + NADP(+) = UDP-N-acetyl-3-O-(1-carboxyvinyl)-alpha-D-glucosamine + NADPH + H(+)</text>
        <dbReference type="Rhea" id="RHEA:12248"/>
        <dbReference type="ChEBI" id="CHEBI:15378"/>
        <dbReference type="ChEBI" id="CHEBI:57783"/>
        <dbReference type="ChEBI" id="CHEBI:58349"/>
        <dbReference type="ChEBI" id="CHEBI:68483"/>
        <dbReference type="ChEBI" id="CHEBI:70757"/>
        <dbReference type="EC" id="1.3.1.98"/>
    </reaction>
</comment>
<comment type="cofactor">
    <cofactor evidence="1">
        <name>FAD</name>
        <dbReference type="ChEBI" id="CHEBI:57692"/>
    </cofactor>
</comment>
<comment type="pathway">
    <text evidence="1">Cell wall biogenesis; peptidoglycan biosynthesis.</text>
</comment>
<comment type="subcellular location">
    <subcellularLocation>
        <location evidence="1">Cytoplasm</location>
    </subcellularLocation>
</comment>
<comment type="similarity">
    <text evidence="1">Belongs to the MurB family.</text>
</comment>
<dbReference type="EC" id="1.3.1.98" evidence="1"/>
<dbReference type="EMBL" id="AE016825">
    <property type="protein sequence ID" value="AAQ59268.1"/>
    <property type="molecule type" value="Genomic_DNA"/>
</dbReference>
<dbReference type="RefSeq" id="WP_011135144.1">
    <property type="nucleotide sequence ID" value="NC_005085.1"/>
</dbReference>
<dbReference type="SMR" id="Q7NXN4"/>
<dbReference type="STRING" id="243365.CV_1592"/>
<dbReference type="GeneID" id="66367275"/>
<dbReference type="KEGG" id="cvi:CV_1592"/>
<dbReference type="eggNOG" id="COG0812">
    <property type="taxonomic scope" value="Bacteria"/>
</dbReference>
<dbReference type="HOGENOM" id="CLU_035304_0_0_4"/>
<dbReference type="OrthoDB" id="9804753at2"/>
<dbReference type="UniPathway" id="UPA00219"/>
<dbReference type="Proteomes" id="UP000001424">
    <property type="component" value="Chromosome"/>
</dbReference>
<dbReference type="GO" id="GO:0005829">
    <property type="term" value="C:cytosol"/>
    <property type="evidence" value="ECO:0007669"/>
    <property type="project" value="TreeGrafter"/>
</dbReference>
<dbReference type="GO" id="GO:0071949">
    <property type="term" value="F:FAD binding"/>
    <property type="evidence" value="ECO:0007669"/>
    <property type="project" value="InterPro"/>
</dbReference>
<dbReference type="GO" id="GO:0008762">
    <property type="term" value="F:UDP-N-acetylmuramate dehydrogenase activity"/>
    <property type="evidence" value="ECO:0007669"/>
    <property type="project" value="UniProtKB-UniRule"/>
</dbReference>
<dbReference type="GO" id="GO:0051301">
    <property type="term" value="P:cell division"/>
    <property type="evidence" value="ECO:0007669"/>
    <property type="project" value="UniProtKB-KW"/>
</dbReference>
<dbReference type="GO" id="GO:0071555">
    <property type="term" value="P:cell wall organization"/>
    <property type="evidence" value="ECO:0007669"/>
    <property type="project" value="UniProtKB-KW"/>
</dbReference>
<dbReference type="GO" id="GO:0009252">
    <property type="term" value="P:peptidoglycan biosynthetic process"/>
    <property type="evidence" value="ECO:0007669"/>
    <property type="project" value="UniProtKB-UniRule"/>
</dbReference>
<dbReference type="GO" id="GO:0008360">
    <property type="term" value="P:regulation of cell shape"/>
    <property type="evidence" value="ECO:0007669"/>
    <property type="project" value="UniProtKB-KW"/>
</dbReference>
<dbReference type="Gene3D" id="3.30.465.10">
    <property type="match status" value="1"/>
</dbReference>
<dbReference type="Gene3D" id="3.90.78.10">
    <property type="entry name" value="UDP-N-acetylenolpyruvoylglucosamine reductase, C-terminal domain"/>
    <property type="match status" value="1"/>
</dbReference>
<dbReference type="Gene3D" id="3.30.43.10">
    <property type="entry name" value="Uridine Diphospho-n-acetylenolpyruvylglucosamine Reductase, domain 2"/>
    <property type="match status" value="1"/>
</dbReference>
<dbReference type="HAMAP" id="MF_00037">
    <property type="entry name" value="MurB"/>
    <property type="match status" value="1"/>
</dbReference>
<dbReference type="InterPro" id="IPR016166">
    <property type="entry name" value="FAD-bd_PCMH"/>
</dbReference>
<dbReference type="InterPro" id="IPR036318">
    <property type="entry name" value="FAD-bd_PCMH-like_sf"/>
</dbReference>
<dbReference type="InterPro" id="IPR016167">
    <property type="entry name" value="FAD-bd_PCMH_sub1"/>
</dbReference>
<dbReference type="InterPro" id="IPR016169">
    <property type="entry name" value="FAD-bd_PCMH_sub2"/>
</dbReference>
<dbReference type="InterPro" id="IPR003170">
    <property type="entry name" value="MurB"/>
</dbReference>
<dbReference type="InterPro" id="IPR011601">
    <property type="entry name" value="MurB_C"/>
</dbReference>
<dbReference type="InterPro" id="IPR036635">
    <property type="entry name" value="MurB_C_sf"/>
</dbReference>
<dbReference type="InterPro" id="IPR006094">
    <property type="entry name" value="Oxid_FAD_bind_N"/>
</dbReference>
<dbReference type="NCBIfam" id="TIGR00179">
    <property type="entry name" value="murB"/>
    <property type="match status" value="1"/>
</dbReference>
<dbReference type="NCBIfam" id="NF000755">
    <property type="entry name" value="PRK00046.1"/>
    <property type="match status" value="1"/>
</dbReference>
<dbReference type="NCBIfam" id="NF010478">
    <property type="entry name" value="PRK13903.1"/>
    <property type="match status" value="1"/>
</dbReference>
<dbReference type="PANTHER" id="PTHR21071">
    <property type="entry name" value="UDP-N-ACETYLENOLPYRUVOYLGLUCOSAMINE REDUCTASE"/>
    <property type="match status" value="1"/>
</dbReference>
<dbReference type="PANTHER" id="PTHR21071:SF4">
    <property type="entry name" value="UDP-N-ACETYLENOLPYRUVOYLGLUCOSAMINE REDUCTASE"/>
    <property type="match status" value="1"/>
</dbReference>
<dbReference type="Pfam" id="PF01565">
    <property type="entry name" value="FAD_binding_4"/>
    <property type="match status" value="1"/>
</dbReference>
<dbReference type="Pfam" id="PF02873">
    <property type="entry name" value="MurB_C"/>
    <property type="match status" value="1"/>
</dbReference>
<dbReference type="SUPFAM" id="SSF56176">
    <property type="entry name" value="FAD-binding/transporter-associated domain-like"/>
    <property type="match status" value="1"/>
</dbReference>
<dbReference type="SUPFAM" id="SSF56194">
    <property type="entry name" value="Uridine diphospho-N-Acetylenolpyruvylglucosamine reductase, MurB, C-terminal domain"/>
    <property type="match status" value="1"/>
</dbReference>
<dbReference type="PROSITE" id="PS51387">
    <property type="entry name" value="FAD_PCMH"/>
    <property type="match status" value="1"/>
</dbReference>
<gene>
    <name evidence="1" type="primary">murB</name>
    <name type="ordered locus">CV_1592</name>
</gene>
<name>MURB_CHRVO</name>
<reference key="1">
    <citation type="journal article" date="2003" name="Proc. Natl. Acad. Sci. U.S.A.">
        <title>The complete genome sequence of Chromobacterium violaceum reveals remarkable and exploitable bacterial adaptability.</title>
        <authorList>
            <person name="Vasconcelos A.T.R."/>
            <person name="de Almeida D.F."/>
            <person name="Hungria M."/>
            <person name="Guimaraes C.T."/>
            <person name="Antonio R.V."/>
            <person name="Almeida F.C."/>
            <person name="de Almeida L.G.P."/>
            <person name="de Almeida R."/>
            <person name="Alves-Gomes J.A."/>
            <person name="Andrade E.M."/>
            <person name="Araripe J."/>
            <person name="de Araujo M.F.F."/>
            <person name="Astolfi-Filho S."/>
            <person name="Azevedo V."/>
            <person name="Baptista A.J."/>
            <person name="Bataus L.A.M."/>
            <person name="Batista J.S."/>
            <person name="Belo A."/>
            <person name="van den Berg C."/>
            <person name="Bogo M."/>
            <person name="Bonatto S."/>
            <person name="Bordignon J."/>
            <person name="Brigido M.M."/>
            <person name="Brito C.A."/>
            <person name="Brocchi M."/>
            <person name="Burity H.A."/>
            <person name="Camargo A.A."/>
            <person name="Cardoso D.D.P."/>
            <person name="Carneiro N.P."/>
            <person name="Carraro D.M."/>
            <person name="Carvalho C.M.B."/>
            <person name="Cascardo J.C.M."/>
            <person name="Cavada B.S."/>
            <person name="Chueire L.M.O."/>
            <person name="Creczynski-Pasa T.B."/>
            <person name="Cunha-Junior N.C."/>
            <person name="Fagundes N."/>
            <person name="Falcao C.L."/>
            <person name="Fantinatti F."/>
            <person name="Farias I.P."/>
            <person name="Felipe M.S.S."/>
            <person name="Ferrari L.P."/>
            <person name="Ferro J.A."/>
            <person name="Ferro M.I.T."/>
            <person name="Franco G.R."/>
            <person name="Freitas N.S.A."/>
            <person name="Furlan L.R."/>
            <person name="Gazzinelli R.T."/>
            <person name="Gomes E.A."/>
            <person name="Goncalves P.R."/>
            <person name="Grangeiro T.B."/>
            <person name="Grattapaglia D."/>
            <person name="Grisard E.C."/>
            <person name="Hanna E.S."/>
            <person name="Jardim S.N."/>
            <person name="Laurino J."/>
            <person name="Leoi L.C.T."/>
            <person name="Lima L.F.A."/>
            <person name="Loureiro M.F."/>
            <person name="Lyra M.C.C.P."/>
            <person name="Madeira H.M.F."/>
            <person name="Manfio G.P."/>
            <person name="Maranhao A.Q."/>
            <person name="Martins W.S."/>
            <person name="di Mauro S.M.Z."/>
            <person name="de Medeiros S.R.B."/>
            <person name="Meissner R.V."/>
            <person name="Moreira M.A.M."/>
            <person name="Nascimento F.F."/>
            <person name="Nicolas M.F."/>
            <person name="Oliveira J.G."/>
            <person name="Oliveira S.C."/>
            <person name="Paixao R.F.C."/>
            <person name="Parente J.A."/>
            <person name="Pedrosa F.O."/>
            <person name="Pena S.D.J."/>
            <person name="Pereira J.O."/>
            <person name="Pereira M."/>
            <person name="Pinto L.S.R.C."/>
            <person name="Pinto L.S."/>
            <person name="Porto J.I.R."/>
            <person name="Potrich D.P."/>
            <person name="Ramalho-Neto C.E."/>
            <person name="Reis A.M.M."/>
            <person name="Rigo L.U."/>
            <person name="Rondinelli E."/>
            <person name="Santos E.B.P."/>
            <person name="Santos F.R."/>
            <person name="Schneider M.P.C."/>
            <person name="Seuanez H.N."/>
            <person name="Silva A.M.R."/>
            <person name="da Silva A.L.C."/>
            <person name="Silva D.W."/>
            <person name="Silva R."/>
            <person name="Simoes I.C."/>
            <person name="Simon D."/>
            <person name="Soares C.M.A."/>
            <person name="Soares R.B.A."/>
            <person name="Souza E.M."/>
            <person name="Souza K.R.L."/>
            <person name="Souza R.C."/>
            <person name="Steffens M.B.R."/>
            <person name="Steindel M."/>
            <person name="Teixeira S.R."/>
            <person name="Urmenyi T."/>
            <person name="Vettore A."/>
            <person name="Wassem R."/>
            <person name="Zaha A."/>
            <person name="Simpson A.J.G."/>
        </authorList>
    </citation>
    <scope>NUCLEOTIDE SEQUENCE [LARGE SCALE GENOMIC DNA]</scope>
    <source>
        <strain>ATCC 12472 / DSM 30191 / JCM 1249 / CCUG 213 / NBRC 12614 / NCIMB 9131 / NCTC 9757 / MK</strain>
    </source>
</reference>
<accession>Q7NXN4</accession>
<sequence>MTLQFRADVDLRPYNTFGMAVRAAHFCQLDDAADLPALLAHPLYRQGPVLWLGGGSNLLLTRDYPGLVVKVALAGIRLLREDGDDMIVEAAAGENWHGFVQHALAQGWYGLENLSLIPGTVGASPVQNIGAYGVEVKDRLLEVVCAQLDRNGEAATLSNAECRFGYRDSVFKHEAAGRLLVTAVRFRLSRRAELRTGYGDIQQQLQADGVDRPTPLDVSRAVVAIRQSKLPDPAVLGNAGSFFKNPVVPAEQAAALLERHPQLPRYPAADGKVKLAAGWLIDQCGLKGYRDGDAGVHDRQALVLVNHGRATGEQMRALARKVQQTVKEKFGVELEPEPLIL</sequence>
<keyword id="KW-0131">Cell cycle</keyword>
<keyword id="KW-0132">Cell division</keyword>
<keyword id="KW-0133">Cell shape</keyword>
<keyword id="KW-0961">Cell wall biogenesis/degradation</keyword>
<keyword id="KW-0963">Cytoplasm</keyword>
<keyword id="KW-0274">FAD</keyword>
<keyword id="KW-0285">Flavoprotein</keyword>
<keyword id="KW-0521">NADP</keyword>
<keyword id="KW-0560">Oxidoreductase</keyword>
<keyword id="KW-0573">Peptidoglycan synthesis</keyword>
<keyword id="KW-1185">Reference proteome</keyword>
<proteinExistence type="inferred from homology"/>